<comment type="function">
    <text evidence="1 2 3">Transports zinc ions across cell and organelle membranes into the cytoplasm and regulates intracellular zinc homeostasis. Participates in the zinc ions efflux out of the secretory compartments. Regulates intracellular zinc level, resulting in the enhancement of AKT1 and MAPK3/MAPK1 (Erk1/2) phosphorylation in response to the BCR activation (By similarity). Also functions as a membrane androgen receptor that mediates, through a G protein, the non-classical androgen signaling pathway, characterized by the activation of MAPK3/MAPK1 (Erk1/2) and transcription factors CREB1 or ATF1 (By similarity). Moreover, has dual functions as a membrane-bound androgen receptor and as an androgen-dependent zinc transporter both of which are mediated through an inhibitory G protein (Gi) that mediates both MAP kinase and zinc signaling leading to the androgen-dependent apoptotic process (By similarity).</text>
</comment>
<comment type="catalytic activity">
    <reaction evidence="3">
        <text>Zn(2+)(in) = Zn(2+)(out)</text>
        <dbReference type="Rhea" id="RHEA:29351"/>
        <dbReference type="ChEBI" id="CHEBI:29105"/>
    </reaction>
</comment>
<comment type="subcellular location">
    <subcellularLocation>
        <location evidence="3">Golgi apparatus</location>
        <location evidence="3">trans-Golgi network membrane</location>
    </subcellularLocation>
    <subcellularLocation>
        <location evidence="3">Cell membrane</location>
        <topology evidence="3">Multi-pass membrane protein</topology>
    </subcellularLocation>
    <subcellularLocation>
        <location evidence="3">Cytoplasm</location>
        <location evidence="3">Perinuclear region</location>
    </subcellularLocation>
    <subcellularLocation>
        <location evidence="3">Mitochondrion</location>
    </subcellularLocation>
    <subcellularLocation>
        <location evidence="3">Nucleus</location>
    </subcellularLocation>
</comment>
<comment type="similarity">
    <text evidence="5">Belongs to the ZIP transporter (TC 2.A.5) family.</text>
</comment>
<keyword id="KW-1003">Cell membrane</keyword>
<keyword id="KW-0963">Cytoplasm</keyword>
<keyword id="KW-0325">Glycoprotein</keyword>
<keyword id="KW-0333">Golgi apparatus</keyword>
<keyword id="KW-0406">Ion transport</keyword>
<keyword id="KW-0472">Membrane</keyword>
<keyword id="KW-0496">Mitochondrion</keyword>
<keyword id="KW-0539">Nucleus</keyword>
<keyword id="KW-1185">Reference proteome</keyword>
<keyword id="KW-0812">Transmembrane</keyword>
<keyword id="KW-1133">Transmembrane helix</keyword>
<keyword id="KW-0813">Transport</keyword>
<keyword id="KW-0862">Zinc</keyword>
<keyword id="KW-0864">Zinc transport</keyword>
<reference key="1">
    <citation type="submission" date="2004-05" db="EMBL/GenBank/DDBJ databases">
        <authorList>
            <consortium name="NIH - Xenopus Gene Collection (XGC) project"/>
        </authorList>
    </citation>
    <scope>NUCLEOTIDE SEQUENCE [LARGE SCALE MRNA]</scope>
    <source>
        <tissue>Oocyte</tissue>
    </source>
</reference>
<feature type="chain" id="PRO_0000297605" description="Zinc transporter ZIP9-B">
    <location>
        <begin position="1"/>
        <end position="303"/>
    </location>
</feature>
<feature type="transmembrane region" description="Helical" evidence="4">
    <location>
        <begin position="7"/>
        <end position="27"/>
    </location>
</feature>
<feature type="transmembrane region" description="Helical" evidence="4">
    <location>
        <begin position="35"/>
        <end position="55"/>
    </location>
</feature>
<feature type="transmembrane region" description="Helical" evidence="4">
    <location>
        <begin position="102"/>
        <end position="122"/>
    </location>
</feature>
<feature type="transmembrane region" description="Helical" evidence="4">
    <location>
        <begin position="142"/>
        <end position="162"/>
    </location>
</feature>
<feature type="transmembrane region" description="Helical" evidence="4">
    <location>
        <begin position="172"/>
        <end position="192"/>
    </location>
</feature>
<feature type="transmembrane region" description="Helical" evidence="4">
    <location>
        <begin position="206"/>
        <end position="226"/>
    </location>
</feature>
<feature type="transmembrane region" description="Helical" evidence="4">
    <location>
        <begin position="240"/>
        <end position="260"/>
    </location>
</feature>
<feature type="transmembrane region" description="Helical" evidence="4">
    <location>
        <begin position="282"/>
        <end position="302"/>
    </location>
</feature>
<feature type="glycosylation site" description="N-linked (GlcNAc...) asparagine" evidence="4">
    <location>
        <position position="29"/>
    </location>
</feature>
<feature type="glycosylation site" description="N-linked (GlcNAc...) asparagine" evidence="4">
    <location>
        <position position="237"/>
    </location>
</feature>
<accession>Q6NRM1</accession>
<sequence length="303" mass="31688">MDDFTSISLLSLAMLVGCYVSGIIPLAVNFSEEKLKLVTVLGAGLLCGTALAVIVPEGVHALYEEALEAKHHEMGEIHKVKDAETGAEASVAHEHDHSNLHAYIGVSLVLGFVFMLLVDQIGSSHMHSADDPEAARAASSKITTTLGLVVHAAADGVALGAAASTSQTSVQLIVFVAIMLHKAPAAFGLVSFLMHAGLERNRIRKHLLVFALAAPLLSMLTYLGLSKSSKEALSEVNATGVAMLFSAGTFLYVATVHVLPEVGGMGHSHKQDLGAAKGLSRLEVCALVLGCLIPLVLSIGHQH</sequence>
<gene>
    <name type="primary">slc39a9-b</name>
    <name type="synonym">zip9-b</name>
</gene>
<organism>
    <name type="scientific">Xenopus laevis</name>
    <name type="common">African clawed frog</name>
    <dbReference type="NCBI Taxonomy" id="8355"/>
    <lineage>
        <taxon>Eukaryota</taxon>
        <taxon>Metazoa</taxon>
        <taxon>Chordata</taxon>
        <taxon>Craniata</taxon>
        <taxon>Vertebrata</taxon>
        <taxon>Euteleostomi</taxon>
        <taxon>Amphibia</taxon>
        <taxon>Batrachia</taxon>
        <taxon>Anura</taxon>
        <taxon>Pipoidea</taxon>
        <taxon>Pipidae</taxon>
        <taxon>Xenopodinae</taxon>
        <taxon>Xenopus</taxon>
        <taxon>Xenopus</taxon>
    </lineage>
</organism>
<proteinExistence type="evidence at transcript level"/>
<name>S399B_XENLA</name>
<dbReference type="EMBL" id="BC070726">
    <property type="protein sequence ID" value="AAH70726.1"/>
    <property type="molecule type" value="mRNA"/>
</dbReference>
<dbReference type="RefSeq" id="NP_001084855.1">
    <property type="nucleotide sequence ID" value="NM_001091386.1"/>
</dbReference>
<dbReference type="SMR" id="Q6NRM1"/>
<dbReference type="GlyCosmos" id="Q6NRM1">
    <property type="glycosylation" value="2 sites, No reported glycans"/>
</dbReference>
<dbReference type="DNASU" id="431902"/>
<dbReference type="GeneID" id="431902"/>
<dbReference type="KEGG" id="xla:431902"/>
<dbReference type="AGR" id="Xenbase:XB-GENE-943778"/>
<dbReference type="CTD" id="431902"/>
<dbReference type="Xenbase" id="XB-GENE-943778">
    <property type="gene designation" value="slc39a9.L"/>
</dbReference>
<dbReference type="OrthoDB" id="19859at2759"/>
<dbReference type="Proteomes" id="UP000186698">
    <property type="component" value="Chromosome 8L"/>
</dbReference>
<dbReference type="Bgee" id="431902">
    <property type="expression patterns" value="Expressed in egg cell and 19 other cell types or tissues"/>
</dbReference>
<dbReference type="GO" id="GO:0031966">
    <property type="term" value="C:mitochondrial membrane"/>
    <property type="evidence" value="ECO:0000250"/>
    <property type="project" value="UniProtKB"/>
</dbReference>
<dbReference type="GO" id="GO:0005739">
    <property type="term" value="C:mitochondrion"/>
    <property type="evidence" value="ECO:0000250"/>
    <property type="project" value="UniProtKB"/>
</dbReference>
<dbReference type="GO" id="GO:0005634">
    <property type="term" value="C:nucleus"/>
    <property type="evidence" value="ECO:0000250"/>
    <property type="project" value="UniProtKB"/>
</dbReference>
<dbReference type="GO" id="GO:0048471">
    <property type="term" value="C:perinuclear region of cytoplasm"/>
    <property type="evidence" value="ECO:0000250"/>
    <property type="project" value="UniProtKB"/>
</dbReference>
<dbReference type="GO" id="GO:0005886">
    <property type="term" value="C:plasma membrane"/>
    <property type="evidence" value="ECO:0000250"/>
    <property type="project" value="UniProtKB"/>
</dbReference>
<dbReference type="GO" id="GO:0005802">
    <property type="term" value="C:trans-Golgi network"/>
    <property type="evidence" value="ECO:0000250"/>
    <property type="project" value="UniProtKB"/>
</dbReference>
<dbReference type="GO" id="GO:0005497">
    <property type="term" value="F:androgen binding"/>
    <property type="evidence" value="ECO:0000250"/>
    <property type="project" value="UniProtKB"/>
</dbReference>
<dbReference type="GO" id="GO:0004930">
    <property type="term" value="F:G protein-coupled receptor activity"/>
    <property type="evidence" value="ECO:0000250"/>
    <property type="project" value="UniProtKB"/>
</dbReference>
<dbReference type="GO" id="GO:0022883">
    <property type="term" value="F:zinc efflux transmembrane transporter activity"/>
    <property type="evidence" value="ECO:0000250"/>
    <property type="project" value="UniProtKB"/>
</dbReference>
<dbReference type="GO" id="GO:0005385">
    <property type="term" value="F:zinc ion transmembrane transporter activity"/>
    <property type="evidence" value="ECO:0000250"/>
    <property type="project" value="UniProtKB"/>
</dbReference>
<dbReference type="GO" id="GO:0070830">
    <property type="term" value="P:bicellular tight junction assembly"/>
    <property type="evidence" value="ECO:0000250"/>
    <property type="project" value="UniProtKB"/>
</dbReference>
<dbReference type="GO" id="GO:0006882">
    <property type="term" value="P:intracellular zinc ion homeostasis"/>
    <property type="evidence" value="ECO:0000250"/>
    <property type="project" value="UniProtKB"/>
</dbReference>
<dbReference type="GO" id="GO:2000654">
    <property type="term" value="P:regulation of cellular response to testosterone stimulus"/>
    <property type="evidence" value="ECO:0000250"/>
    <property type="project" value="UniProtKB"/>
</dbReference>
<dbReference type="GO" id="GO:1905562">
    <property type="term" value="P:regulation of vascular endothelial cell proliferation"/>
    <property type="evidence" value="ECO:0000250"/>
    <property type="project" value="UniProtKB"/>
</dbReference>
<dbReference type="GO" id="GO:0071577">
    <property type="term" value="P:zinc ion transmembrane transport"/>
    <property type="evidence" value="ECO:0000250"/>
    <property type="project" value="UniProtKB"/>
</dbReference>
<dbReference type="InterPro" id="IPR003689">
    <property type="entry name" value="ZIP"/>
</dbReference>
<dbReference type="InterPro" id="IPR045891">
    <property type="entry name" value="ZIP9"/>
</dbReference>
<dbReference type="PANTHER" id="PTHR16133">
    <property type="entry name" value="SOLUTE CARRIER FAMILY 39 ZINC TRANSPORTER , MEMBER 9-RELATED"/>
    <property type="match status" value="1"/>
</dbReference>
<dbReference type="PANTHER" id="PTHR16133:SF5">
    <property type="entry name" value="ZINC TRANSPORTER ZIP9"/>
    <property type="match status" value="1"/>
</dbReference>
<dbReference type="Pfam" id="PF02535">
    <property type="entry name" value="Zip"/>
    <property type="match status" value="1"/>
</dbReference>
<evidence type="ECO:0000250" key="1">
    <source>
        <dbReference type="UniProtKB" id="Q3KR82"/>
    </source>
</evidence>
<evidence type="ECO:0000250" key="2">
    <source>
        <dbReference type="UniProtKB" id="Q8BFU1"/>
    </source>
</evidence>
<evidence type="ECO:0000250" key="3">
    <source>
        <dbReference type="UniProtKB" id="Q9NUM3"/>
    </source>
</evidence>
<evidence type="ECO:0000255" key="4"/>
<evidence type="ECO:0000305" key="5"/>
<protein>
    <recommendedName>
        <fullName evidence="3">Zinc transporter ZIP9-B</fullName>
    </recommendedName>
    <alternativeName>
        <fullName>Solute carrier family 39 member 9-B</fullName>
    </alternativeName>
    <alternativeName>
        <fullName>Zrt- and Irt-like protein 9-B</fullName>
        <shortName>ZIP-9-B</shortName>
    </alternativeName>
</protein>